<protein>
    <recommendedName>
        <fullName evidence="1">Methionyl-tRNA formyltransferase</fullName>
        <ecNumber evidence="1">2.1.2.9</ecNumber>
    </recommendedName>
</protein>
<name>FMT_STRPB</name>
<proteinExistence type="inferred from homology"/>
<gene>
    <name evidence="1" type="primary">fmt</name>
    <name type="ordered locus">MGAS2096_Spy1359</name>
</gene>
<reference key="1">
    <citation type="journal article" date="2006" name="Proc. Natl. Acad. Sci. U.S.A.">
        <title>Molecular genetic anatomy of inter- and intraserotype variation in the human bacterial pathogen group A Streptococcus.</title>
        <authorList>
            <person name="Beres S.B."/>
            <person name="Richter E.W."/>
            <person name="Nagiec M.J."/>
            <person name="Sumby P."/>
            <person name="Porcella S.F."/>
            <person name="DeLeo F.R."/>
            <person name="Musser J.M."/>
        </authorList>
    </citation>
    <scope>NUCLEOTIDE SEQUENCE [LARGE SCALE GENOMIC DNA]</scope>
    <source>
        <strain>MGAS2096</strain>
    </source>
</reference>
<sequence length="311" mass="33675">MIKLLFMGTPQFSATVLKGLLDNPAYEILGVVTQPDRAVGRKKDIKVTPVKQLALEHGISIYQPEKLSGSQELIEIMGLGADGIITAAFGQFLPTLLLDSVSFAINVHASLLPKYRGGAPIHYAIMNGDKEAGVTIMEMIKEMDAGDMVAKASTPILETDNVGTLFEKLAIIGRDLLLDSLPAYLSGELKPIPQDHSQATFSPNISPEQEKLDWTMSNQEVFNHIRGMNPWPVAHTFLEGQRLKIYEAQLAEGEGLPGQVIVKTKKSLVIATGQGALSLIVVQPAGKPKMSIIDFLNGIGRKLEVGDIIGR</sequence>
<feature type="chain" id="PRO_1000020177" description="Methionyl-tRNA formyltransferase">
    <location>
        <begin position="1"/>
        <end position="311"/>
    </location>
</feature>
<feature type="binding site" evidence="1">
    <location>
        <begin position="110"/>
        <end position="113"/>
    </location>
    <ligand>
        <name>(6S)-5,6,7,8-tetrahydrofolate</name>
        <dbReference type="ChEBI" id="CHEBI:57453"/>
    </ligand>
</feature>
<accession>Q1JAJ7</accession>
<comment type="function">
    <text evidence="1">Attaches a formyl group to the free amino group of methionyl-tRNA(fMet). The formyl group appears to play a dual role in the initiator identity of N-formylmethionyl-tRNA by promoting its recognition by IF2 and preventing the misappropriation of this tRNA by the elongation apparatus.</text>
</comment>
<comment type="catalytic activity">
    <reaction evidence="1">
        <text>L-methionyl-tRNA(fMet) + (6R)-10-formyltetrahydrofolate = N-formyl-L-methionyl-tRNA(fMet) + (6S)-5,6,7,8-tetrahydrofolate + H(+)</text>
        <dbReference type="Rhea" id="RHEA:24380"/>
        <dbReference type="Rhea" id="RHEA-COMP:9952"/>
        <dbReference type="Rhea" id="RHEA-COMP:9953"/>
        <dbReference type="ChEBI" id="CHEBI:15378"/>
        <dbReference type="ChEBI" id="CHEBI:57453"/>
        <dbReference type="ChEBI" id="CHEBI:78530"/>
        <dbReference type="ChEBI" id="CHEBI:78844"/>
        <dbReference type="ChEBI" id="CHEBI:195366"/>
        <dbReference type="EC" id="2.1.2.9"/>
    </reaction>
</comment>
<comment type="similarity">
    <text evidence="1">Belongs to the Fmt family.</text>
</comment>
<organism>
    <name type="scientific">Streptococcus pyogenes serotype M12 (strain MGAS2096)</name>
    <dbReference type="NCBI Taxonomy" id="370553"/>
    <lineage>
        <taxon>Bacteria</taxon>
        <taxon>Bacillati</taxon>
        <taxon>Bacillota</taxon>
        <taxon>Bacilli</taxon>
        <taxon>Lactobacillales</taxon>
        <taxon>Streptococcaceae</taxon>
        <taxon>Streptococcus</taxon>
    </lineage>
</organism>
<keyword id="KW-0648">Protein biosynthesis</keyword>
<keyword id="KW-0808">Transferase</keyword>
<evidence type="ECO:0000255" key="1">
    <source>
        <dbReference type="HAMAP-Rule" id="MF_00182"/>
    </source>
</evidence>
<dbReference type="EC" id="2.1.2.9" evidence="1"/>
<dbReference type="EMBL" id="CP000261">
    <property type="protein sequence ID" value="ABF36411.1"/>
    <property type="molecule type" value="Genomic_DNA"/>
</dbReference>
<dbReference type="SMR" id="Q1JAJ7"/>
<dbReference type="KEGG" id="spj:MGAS2096_Spy1359"/>
<dbReference type="HOGENOM" id="CLU_033347_1_1_9"/>
<dbReference type="GO" id="GO:0005829">
    <property type="term" value="C:cytosol"/>
    <property type="evidence" value="ECO:0007669"/>
    <property type="project" value="TreeGrafter"/>
</dbReference>
<dbReference type="GO" id="GO:0004479">
    <property type="term" value="F:methionyl-tRNA formyltransferase activity"/>
    <property type="evidence" value="ECO:0007669"/>
    <property type="project" value="UniProtKB-UniRule"/>
</dbReference>
<dbReference type="CDD" id="cd08646">
    <property type="entry name" value="FMT_core_Met-tRNA-FMT_N"/>
    <property type="match status" value="1"/>
</dbReference>
<dbReference type="CDD" id="cd08704">
    <property type="entry name" value="Met_tRNA_FMT_C"/>
    <property type="match status" value="1"/>
</dbReference>
<dbReference type="FunFam" id="3.40.50.170:FF:000004">
    <property type="entry name" value="Methionyl-tRNA formyltransferase"/>
    <property type="match status" value="1"/>
</dbReference>
<dbReference type="Gene3D" id="3.10.25.10">
    <property type="entry name" value="Formyl transferase, C-terminal domain"/>
    <property type="match status" value="1"/>
</dbReference>
<dbReference type="Gene3D" id="3.40.50.170">
    <property type="entry name" value="Formyl transferase, N-terminal domain"/>
    <property type="match status" value="1"/>
</dbReference>
<dbReference type="HAMAP" id="MF_00182">
    <property type="entry name" value="Formyl_trans"/>
    <property type="match status" value="1"/>
</dbReference>
<dbReference type="InterPro" id="IPR005794">
    <property type="entry name" value="Fmt"/>
</dbReference>
<dbReference type="InterPro" id="IPR005793">
    <property type="entry name" value="Formyl_trans_C"/>
</dbReference>
<dbReference type="InterPro" id="IPR037022">
    <property type="entry name" value="Formyl_trans_C_sf"/>
</dbReference>
<dbReference type="InterPro" id="IPR002376">
    <property type="entry name" value="Formyl_transf_N"/>
</dbReference>
<dbReference type="InterPro" id="IPR036477">
    <property type="entry name" value="Formyl_transf_N_sf"/>
</dbReference>
<dbReference type="InterPro" id="IPR011034">
    <property type="entry name" value="Formyl_transferase-like_C_sf"/>
</dbReference>
<dbReference type="InterPro" id="IPR001555">
    <property type="entry name" value="GART_AS"/>
</dbReference>
<dbReference type="InterPro" id="IPR044135">
    <property type="entry name" value="Met-tRNA-FMT_C"/>
</dbReference>
<dbReference type="InterPro" id="IPR041711">
    <property type="entry name" value="Met-tRNA-FMT_N"/>
</dbReference>
<dbReference type="NCBIfam" id="TIGR00460">
    <property type="entry name" value="fmt"/>
    <property type="match status" value="1"/>
</dbReference>
<dbReference type="PANTHER" id="PTHR11138">
    <property type="entry name" value="METHIONYL-TRNA FORMYLTRANSFERASE"/>
    <property type="match status" value="1"/>
</dbReference>
<dbReference type="PANTHER" id="PTHR11138:SF5">
    <property type="entry name" value="METHIONYL-TRNA FORMYLTRANSFERASE, MITOCHONDRIAL"/>
    <property type="match status" value="1"/>
</dbReference>
<dbReference type="Pfam" id="PF02911">
    <property type="entry name" value="Formyl_trans_C"/>
    <property type="match status" value="1"/>
</dbReference>
<dbReference type="Pfam" id="PF00551">
    <property type="entry name" value="Formyl_trans_N"/>
    <property type="match status" value="1"/>
</dbReference>
<dbReference type="SUPFAM" id="SSF50486">
    <property type="entry name" value="FMT C-terminal domain-like"/>
    <property type="match status" value="1"/>
</dbReference>
<dbReference type="SUPFAM" id="SSF53328">
    <property type="entry name" value="Formyltransferase"/>
    <property type="match status" value="1"/>
</dbReference>
<dbReference type="PROSITE" id="PS00373">
    <property type="entry name" value="GART"/>
    <property type="match status" value="1"/>
</dbReference>